<gene>
    <name type="ordered locus">MJ0038</name>
</gene>
<feature type="chain" id="PRO_0000106662" description="Uncharacterized protein MJ0038">
    <location>
        <begin position="1"/>
        <end position="217"/>
    </location>
</feature>
<protein>
    <recommendedName>
        <fullName>Uncharacterized protein MJ0038</fullName>
    </recommendedName>
</protein>
<proteinExistence type="predicted"/>
<name>Y038_METJA</name>
<dbReference type="EMBL" id="L77117">
    <property type="protein sequence ID" value="AAB98019.1"/>
    <property type="molecule type" value="Genomic_DNA"/>
</dbReference>
<dbReference type="PIR" id="F64304">
    <property type="entry name" value="F64304"/>
</dbReference>
<dbReference type="RefSeq" id="WP_010869529.1">
    <property type="nucleotide sequence ID" value="NC_000909.1"/>
</dbReference>
<dbReference type="SMR" id="Q60345"/>
<dbReference type="FunCoup" id="Q60345">
    <property type="interactions" value="5"/>
</dbReference>
<dbReference type="STRING" id="243232.MJ_0038"/>
<dbReference type="PaxDb" id="243232-MJ_0038"/>
<dbReference type="EnsemblBacteria" id="AAB98019">
    <property type="protein sequence ID" value="AAB98019"/>
    <property type="gene ID" value="MJ_0038"/>
</dbReference>
<dbReference type="GeneID" id="1450876"/>
<dbReference type="KEGG" id="mja:MJ_0038"/>
<dbReference type="eggNOG" id="arCOG04130">
    <property type="taxonomic scope" value="Archaea"/>
</dbReference>
<dbReference type="HOGENOM" id="CLU_076814_1_0_2"/>
<dbReference type="InParanoid" id="Q60345"/>
<dbReference type="OrthoDB" id="7902at2157"/>
<dbReference type="PhylomeDB" id="Q60345"/>
<dbReference type="Proteomes" id="UP000000805">
    <property type="component" value="Chromosome"/>
</dbReference>
<dbReference type="Gene3D" id="1.10.150.280">
    <property type="entry name" value="AF1531-like domain"/>
    <property type="match status" value="1"/>
</dbReference>
<dbReference type="Gene3D" id="2.40.50.140">
    <property type="entry name" value="Nucleic acid-binding proteins"/>
    <property type="match status" value="1"/>
</dbReference>
<dbReference type="InterPro" id="IPR007003">
    <property type="entry name" value="DUF655"/>
</dbReference>
<dbReference type="InterPro" id="IPR012340">
    <property type="entry name" value="NA-bd_OB-fold"/>
</dbReference>
<dbReference type="PANTHER" id="PTHR40734:SF1">
    <property type="entry name" value="DNA-BINDING PROTEIN"/>
    <property type="match status" value="1"/>
</dbReference>
<dbReference type="PANTHER" id="PTHR40734">
    <property type="entry name" value="TRNA-SPECIFIC ADENOSINE DEAMINASE-RELATED"/>
    <property type="match status" value="1"/>
</dbReference>
<dbReference type="Pfam" id="PF04919">
    <property type="entry name" value="DUF655"/>
    <property type="match status" value="1"/>
</dbReference>
<dbReference type="SUPFAM" id="SSF160975">
    <property type="entry name" value="AF1531-like"/>
    <property type="match status" value="1"/>
</dbReference>
<accession>Q60345</accession>
<keyword id="KW-1185">Reference proteome</keyword>
<organism>
    <name type="scientific">Methanocaldococcus jannaschii (strain ATCC 43067 / DSM 2661 / JAL-1 / JCM 10045 / NBRC 100440)</name>
    <name type="common">Methanococcus jannaschii</name>
    <dbReference type="NCBI Taxonomy" id="243232"/>
    <lineage>
        <taxon>Archaea</taxon>
        <taxon>Methanobacteriati</taxon>
        <taxon>Methanobacteriota</taxon>
        <taxon>Methanomada group</taxon>
        <taxon>Methanococci</taxon>
        <taxon>Methanococcales</taxon>
        <taxon>Methanocaldococcaceae</taxon>
        <taxon>Methanocaldococcus</taxon>
    </lineage>
</organism>
<sequence length="217" mass="26274">MVRGQYKKGNDERMRFPKKNKPQKFENYAWVLDYLPYGYPDKPDEPIVQGLGEYQFLLMEMIPKPNVDIELGERVYIGKGKRDKIDHVRRMIKYEQLTPTAKSELLYVVMEAVKIQEDRFVRFFNECPPITTRLHTLELLPEIKKKYMWKIIEEREAKKFESFKDFEERIGKNPVRIIAKRIEKELSDDKKDKYYLFVKWKKGIILNEDNMTFYLKE</sequence>
<reference key="1">
    <citation type="journal article" date="1996" name="Science">
        <title>Complete genome sequence of the methanogenic archaeon, Methanococcus jannaschii.</title>
        <authorList>
            <person name="Bult C.J."/>
            <person name="White O."/>
            <person name="Olsen G.J."/>
            <person name="Zhou L."/>
            <person name="Fleischmann R.D."/>
            <person name="Sutton G.G."/>
            <person name="Blake J.A."/>
            <person name="FitzGerald L.M."/>
            <person name="Clayton R.A."/>
            <person name="Gocayne J.D."/>
            <person name="Kerlavage A.R."/>
            <person name="Dougherty B.A."/>
            <person name="Tomb J.-F."/>
            <person name="Adams M.D."/>
            <person name="Reich C.I."/>
            <person name="Overbeek R."/>
            <person name="Kirkness E.F."/>
            <person name="Weinstock K.G."/>
            <person name="Merrick J.M."/>
            <person name="Glodek A."/>
            <person name="Scott J.L."/>
            <person name="Geoghagen N.S.M."/>
            <person name="Weidman J.F."/>
            <person name="Fuhrmann J.L."/>
            <person name="Nguyen D."/>
            <person name="Utterback T.R."/>
            <person name="Kelley J.M."/>
            <person name="Peterson J.D."/>
            <person name="Sadow P.W."/>
            <person name="Hanna M.C."/>
            <person name="Cotton M.D."/>
            <person name="Roberts K.M."/>
            <person name="Hurst M.A."/>
            <person name="Kaine B.P."/>
            <person name="Borodovsky M."/>
            <person name="Klenk H.-P."/>
            <person name="Fraser C.M."/>
            <person name="Smith H.O."/>
            <person name="Woese C.R."/>
            <person name="Venter J.C."/>
        </authorList>
    </citation>
    <scope>NUCLEOTIDE SEQUENCE [LARGE SCALE GENOMIC DNA]</scope>
    <source>
        <strain>ATCC 43067 / DSM 2661 / JAL-1 / JCM 10045 / NBRC 100440</strain>
    </source>
</reference>